<protein>
    <recommendedName>
        <fullName>Putative uncharacterized protein FLJ37218</fullName>
    </recommendedName>
</protein>
<comment type="interaction">
    <interactant intactId="EBI-25911564">
        <id>Q8N1Y9</id>
    </interactant>
    <interactant intactId="EBI-748974">
        <id>Q96CV9</id>
        <label>OPTN</label>
    </interactant>
    <organismsDiffer>false</organismsDiffer>
    <experiments>3</experiments>
</comment>
<comment type="subcellular location">
    <subcellularLocation>
        <location evidence="3">Membrane</location>
        <topology evidence="3">Single-pass type I membrane protein</topology>
    </subcellularLocation>
</comment>
<comment type="caution">
    <text evidence="3">Product of a dubious gene prediction.</text>
</comment>
<feature type="signal peptide" evidence="1">
    <location>
        <begin position="1"/>
        <end position="25"/>
    </location>
</feature>
<feature type="chain" id="PRO_0000339365" description="Putative uncharacterized protein FLJ37218">
    <location>
        <begin position="26"/>
        <end position="231"/>
    </location>
</feature>
<feature type="topological domain" description="Extracellular" evidence="1">
    <location>
        <begin position="26"/>
        <end position="200"/>
    </location>
</feature>
<feature type="transmembrane region" description="Helical" evidence="1">
    <location>
        <begin position="201"/>
        <end position="225"/>
    </location>
</feature>
<feature type="topological domain" description="Cytoplasmic" evidence="1">
    <location>
        <begin position="226"/>
        <end position="231"/>
    </location>
</feature>
<feature type="region of interest" description="Disordered" evidence="2">
    <location>
        <begin position="39"/>
        <end position="64"/>
    </location>
</feature>
<feature type="sequence conflict" description="In Ref. 3; AK094537." evidence="3" ref="3">
    <original>P</original>
    <variation>T</variation>
    <location>
        <position position="96"/>
    </location>
</feature>
<feature type="sequence conflict" description="In Ref. 3; AK094537." evidence="3" ref="3">
    <original>S</original>
    <variation>P</variation>
    <location>
        <position position="169"/>
    </location>
</feature>
<organism>
    <name type="scientific">Homo sapiens</name>
    <name type="common">Human</name>
    <dbReference type="NCBI Taxonomy" id="9606"/>
    <lineage>
        <taxon>Eukaryota</taxon>
        <taxon>Metazoa</taxon>
        <taxon>Chordata</taxon>
        <taxon>Craniata</taxon>
        <taxon>Vertebrata</taxon>
        <taxon>Euteleostomi</taxon>
        <taxon>Mammalia</taxon>
        <taxon>Eutheria</taxon>
        <taxon>Euarchontoglires</taxon>
        <taxon>Primates</taxon>
        <taxon>Haplorrhini</taxon>
        <taxon>Catarrhini</taxon>
        <taxon>Hominidae</taxon>
        <taxon>Homo</taxon>
    </lineage>
</organism>
<sequence>MAKWVPALLLRRVPLFSLRFRPASSTFLPVLAATEPAVSVPSGDLSMPVKTRAEGEDDGFGEAGDPRRLLERPWRFRGCLPGKGNRDVGFEGTEGPTSTRPEWVWSCRCCLGCRASTRERVTSPVRAAGPQPRFTDRETEAAAGTLAHMGFAPPTSFSHFTDQELRDCSSLECLGVVEGDPHVLCSTLSLSRPSPSATLTLLLASSCLLAPAPPSFILLLFTLIAPDLPHS</sequence>
<reference key="1">
    <citation type="journal article" date="2004" name="Nature">
        <title>DNA sequence and analysis of human chromosome 9.</title>
        <authorList>
            <person name="Humphray S.J."/>
            <person name="Oliver K."/>
            <person name="Hunt A.R."/>
            <person name="Plumb R.W."/>
            <person name="Loveland J.E."/>
            <person name="Howe K.L."/>
            <person name="Andrews T.D."/>
            <person name="Searle S."/>
            <person name="Hunt S.E."/>
            <person name="Scott C.E."/>
            <person name="Jones M.C."/>
            <person name="Ainscough R."/>
            <person name="Almeida J.P."/>
            <person name="Ambrose K.D."/>
            <person name="Ashwell R.I.S."/>
            <person name="Babbage A.K."/>
            <person name="Babbage S."/>
            <person name="Bagguley C.L."/>
            <person name="Bailey J."/>
            <person name="Banerjee R."/>
            <person name="Barker D.J."/>
            <person name="Barlow K.F."/>
            <person name="Bates K."/>
            <person name="Beasley H."/>
            <person name="Beasley O."/>
            <person name="Bird C.P."/>
            <person name="Bray-Allen S."/>
            <person name="Brown A.J."/>
            <person name="Brown J.Y."/>
            <person name="Burford D."/>
            <person name="Burrill W."/>
            <person name="Burton J."/>
            <person name="Carder C."/>
            <person name="Carter N.P."/>
            <person name="Chapman J.C."/>
            <person name="Chen Y."/>
            <person name="Clarke G."/>
            <person name="Clark S.Y."/>
            <person name="Clee C.M."/>
            <person name="Clegg S."/>
            <person name="Collier R.E."/>
            <person name="Corby N."/>
            <person name="Crosier M."/>
            <person name="Cummings A.T."/>
            <person name="Davies J."/>
            <person name="Dhami P."/>
            <person name="Dunn M."/>
            <person name="Dutta I."/>
            <person name="Dyer L.W."/>
            <person name="Earthrowl M.E."/>
            <person name="Faulkner L."/>
            <person name="Fleming C.J."/>
            <person name="Frankish A."/>
            <person name="Frankland J.A."/>
            <person name="French L."/>
            <person name="Fricker D.G."/>
            <person name="Garner P."/>
            <person name="Garnett J."/>
            <person name="Ghori J."/>
            <person name="Gilbert J.G.R."/>
            <person name="Glison C."/>
            <person name="Grafham D.V."/>
            <person name="Gribble S."/>
            <person name="Griffiths C."/>
            <person name="Griffiths-Jones S."/>
            <person name="Grocock R."/>
            <person name="Guy J."/>
            <person name="Hall R.E."/>
            <person name="Hammond S."/>
            <person name="Harley J.L."/>
            <person name="Harrison E.S.I."/>
            <person name="Hart E.A."/>
            <person name="Heath P.D."/>
            <person name="Henderson C.D."/>
            <person name="Hopkins B.L."/>
            <person name="Howard P.J."/>
            <person name="Howden P.J."/>
            <person name="Huckle E."/>
            <person name="Johnson C."/>
            <person name="Johnson D."/>
            <person name="Joy A.A."/>
            <person name="Kay M."/>
            <person name="Keenan S."/>
            <person name="Kershaw J.K."/>
            <person name="Kimberley A.M."/>
            <person name="King A."/>
            <person name="Knights A."/>
            <person name="Laird G.K."/>
            <person name="Langford C."/>
            <person name="Lawlor S."/>
            <person name="Leongamornlert D.A."/>
            <person name="Leversha M."/>
            <person name="Lloyd C."/>
            <person name="Lloyd D.M."/>
            <person name="Lovell J."/>
            <person name="Martin S."/>
            <person name="Mashreghi-Mohammadi M."/>
            <person name="Matthews L."/>
            <person name="McLaren S."/>
            <person name="McLay K.E."/>
            <person name="McMurray A."/>
            <person name="Milne S."/>
            <person name="Nickerson T."/>
            <person name="Nisbett J."/>
            <person name="Nordsiek G."/>
            <person name="Pearce A.V."/>
            <person name="Peck A.I."/>
            <person name="Porter K.M."/>
            <person name="Pandian R."/>
            <person name="Pelan S."/>
            <person name="Phillimore B."/>
            <person name="Povey S."/>
            <person name="Ramsey Y."/>
            <person name="Rand V."/>
            <person name="Scharfe M."/>
            <person name="Sehra H.K."/>
            <person name="Shownkeen R."/>
            <person name="Sims S.K."/>
            <person name="Skuce C.D."/>
            <person name="Smith M."/>
            <person name="Steward C.A."/>
            <person name="Swarbreck D."/>
            <person name="Sycamore N."/>
            <person name="Tester J."/>
            <person name="Thorpe A."/>
            <person name="Tracey A."/>
            <person name="Tromans A."/>
            <person name="Thomas D.W."/>
            <person name="Wall M."/>
            <person name="Wallis J.M."/>
            <person name="West A.P."/>
            <person name="Whitehead S.L."/>
            <person name="Willey D.L."/>
            <person name="Williams S.A."/>
            <person name="Wilming L."/>
            <person name="Wray P.W."/>
            <person name="Young L."/>
            <person name="Ashurst J.L."/>
            <person name="Coulson A."/>
            <person name="Blocker H."/>
            <person name="Durbin R.M."/>
            <person name="Sulston J.E."/>
            <person name="Hubbard T."/>
            <person name="Jackson M.J."/>
            <person name="Bentley D.R."/>
            <person name="Beck S."/>
            <person name="Rogers J."/>
            <person name="Dunham I."/>
        </authorList>
    </citation>
    <scope>NUCLEOTIDE SEQUENCE [LARGE SCALE GENOMIC DNA]</scope>
</reference>
<reference key="2">
    <citation type="journal article" date="2004" name="Genome Res.">
        <title>The status, quality, and expansion of the NIH full-length cDNA project: the Mammalian Gene Collection (MGC).</title>
        <authorList>
            <consortium name="The MGC Project Team"/>
        </authorList>
    </citation>
    <scope>NUCLEOTIDE SEQUENCE [LARGE SCALE MRNA] OF 9-231</scope>
</reference>
<reference key="3">
    <citation type="journal article" date="2004" name="Nat. Genet.">
        <title>Complete sequencing and characterization of 21,243 full-length human cDNAs.</title>
        <authorList>
            <person name="Ota T."/>
            <person name="Suzuki Y."/>
            <person name="Nishikawa T."/>
            <person name="Otsuki T."/>
            <person name="Sugiyama T."/>
            <person name="Irie R."/>
            <person name="Wakamatsu A."/>
            <person name="Hayashi K."/>
            <person name="Sato H."/>
            <person name="Nagai K."/>
            <person name="Kimura K."/>
            <person name="Makita H."/>
            <person name="Sekine M."/>
            <person name="Obayashi M."/>
            <person name="Nishi T."/>
            <person name="Shibahara T."/>
            <person name="Tanaka T."/>
            <person name="Ishii S."/>
            <person name="Yamamoto J."/>
            <person name="Saito K."/>
            <person name="Kawai Y."/>
            <person name="Isono Y."/>
            <person name="Nakamura Y."/>
            <person name="Nagahari K."/>
            <person name="Murakami K."/>
            <person name="Yasuda T."/>
            <person name="Iwayanagi T."/>
            <person name="Wagatsuma M."/>
            <person name="Shiratori A."/>
            <person name="Sudo H."/>
            <person name="Hosoiri T."/>
            <person name="Kaku Y."/>
            <person name="Kodaira H."/>
            <person name="Kondo H."/>
            <person name="Sugawara M."/>
            <person name="Takahashi M."/>
            <person name="Kanda K."/>
            <person name="Yokoi T."/>
            <person name="Furuya T."/>
            <person name="Kikkawa E."/>
            <person name="Omura Y."/>
            <person name="Abe K."/>
            <person name="Kamihara K."/>
            <person name="Katsuta N."/>
            <person name="Sato K."/>
            <person name="Tanikawa M."/>
            <person name="Yamazaki M."/>
            <person name="Ninomiya K."/>
            <person name="Ishibashi T."/>
            <person name="Yamashita H."/>
            <person name="Murakawa K."/>
            <person name="Fujimori K."/>
            <person name="Tanai H."/>
            <person name="Kimata M."/>
            <person name="Watanabe M."/>
            <person name="Hiraoka S."/>
            <person name="Chiba Y."/>
            <person name="Ishida S."/>
            <person name="Ono Y."/>
            <person name="Takiguchi S."/>
            <person name="Watanabe S."/>
            <person name="Yosida M."/>
            <person name="Hotuta T."/>
            <person name="Kusano J."/>
            <person name="Kanehori K."/>
            <person name="Takahashi-Fujii A."/>
            <person name="Hara H."/>
            <person name="Tanase T.-O."/>
            <person name="Nomura Y."/>
            <person name="Togiya S."/>
            <person name="Komai F."/>
            <person name="Hara R."/>
            <person name="Takeuchi K."/>
            <person name="Arita M."/>
            <person name="Imose N."/>
            <person name="Musashino K."/>
            <person name="Yuuki H."/>
            <person name="Oshima A."/>
            <person name="Sasaki N."/>
            <person name="Aotsuka S."/>
            <person name="Yoshikawa Y."/>
            <person name="Matsunawa H."/>
            <person name="Ichihara T."/>
            <person name="Shiohata N."/>
            <person name="Sano S."/>
            <person name="Moriya S."/>
            <person name="Momiyama H."/>
            <person name="Satoh N."/>
            <person name="Takami S."/>
            <person name="Terashima Y."/>
            <person name="Suzuki O."/>
            <person name="Nakagawa S."/>
            <person name="Senoh A."/>
            <person name="Mizoguchi H."/>
            <person name="Goto Y."/>
            <person name="Shimizu F."/>
            <person name="Wakebe H."/>
            <person name="Hishigaki H."/>
            <person name="Watanabe T."/>
            <person name="Sugiyama A."/>
            <person name="Takemoto M."/>
            <person name="Kawakami B."/>
            <person name="Yamazaki M."/>
            <person name="Watanabe K."/>
            <person name="Kumagai A."/>
            <person name="Itakura S."/>
            <person name="Fukuzumi Y."/>
            <person name="Fujimori Y."/>
            <person name="Komiyama M."/>
            <person name="Tashiro H."/>
            <person name="Tanigami A."/>
            <person name="Fujiwara T."/>
            <person name="Ono T."/>
            <person name="Yamada K."/>
            <person name="Fujii Y."/>
            <person name="Ozaki K."/>
            <person name="Hirao M."/>
            <person name="Ohmori Y."/>
            <person name="Kawabata A."/>
            <person name="Hikiji T."/>
            <person name="Kobatake N."/>
            <person name="Inagaki H."/>
            <person name="Ikema Y."/>
            <person name="Okamoto S."/>
            <person name="Okitani R."/>
            <person name="Kawakami T."/>
            <person name="Noguchi S."/>
            <person name="Itoh T."/>
            <person name="Shigeta K."/>
            <person name="Senba T."/>
            <person name="Matsumura K."/>
            <person name="Nakajima Y."/>
            <person name="Mizuno T."/>
            <person name="Morinaga M."/>
            <person name="Sasaki M."/>
            <person name="Togashi T."/>
            <person name="Oyama M."/>
            <person name="Hata H."/>
            <person name="Watanabe M."/>
            <person name="Komatsu T."/>
            <person name="Mizushima-Sugano J."/>
            <person name="Satoh T."/>
            <person name="Shirai Y."/>
            <person name="Takahashi Y."/>
            <person name="Nakagawa K."/>
            <person name="Okumura K."/>
            <person name="Nagase T."/>
            <person name="Nomura N."/>
            <person name="Kikuchi H."/>
            <person name="Masuho Y."/>
            <person name="Yamashita R."/>
            <person name="Nakai K."/>
            <person name="Yada T."/>
            <person name="Nakamura Y."/>
            <person name="Ohara O."/>
            <person name="Isogai T."/>
            <person name="Sugano S."/>
        </authorList>
    </citation>
    <scope>NUCLEOTIDE SEQUENCE [LARGE SCALE MRNA] OF 15-231</scope>
    <source>
        <tissue>Brain cortex</tissue>
    </source>
</reference>
<name>YI025_HUMAN</name>
<dbReference type="EMBL" id="AL590708">
    <property type="status" value="NOT_ANNOTATED_CDS"/>
    <property type="molecule type" value="Genomic_DNA"/>
</dbReference>
<dbReference type="EMBL" id="BC151210">
    <property type="status" value="NOT_ANNOTATED_CDS"/>
    <property type="molecule type" value="mRNA"/>
</dbReference>
<dbReference type="EMBL" id="AK094537">
    <property type="status" value="NOT_ANNOTATED_CDS"/>
    <property type="molecule type" value="mRNA"/>
</dbReference>
<dbReference type="FunCoup" id="Q8N1Y9">
    <property type="interactions" value="1"/>
</dbReference>
<dbReference type="IntAct" id="Q8N1Y9">
    <property type="interactions" value="1"/>
</dbReference>
<dbReference type="GlyGen" id="Q8N1Y9">
    <property type="glycosylation" value="1 site"/>
</dbReference>
<dbReference type="BioMuta" id="-"/>
<dbReference type="DMDM" id="190461798"/>
<dbReference type="AGR" id="HGNC:48711"/>
<dbReference type="neXtProt" id="NX_Q8N1Y9"/>
<dbReference type="InParanoid" id="Q8N1Y9"/>
<dbReference type="PAN-GO" id="Q8N1Y9">
    <property type="GO annotations" value="0 GO annotations based on evolutionary models"/>
</dbReference>
<dbReference type="PathwayCommons" id="Q8N1Y9"/>
<dbReference type="Pharos" id="Q8N1Y9">
    <property type="development level" value="Tdark"/>
</dbReference>
<dbReference type="Proteomes" id="UP000005640">
    <property type="component" value="Unplaced"/>
</dbReference>
<dbReference type="RNAct" id="Q8N1Y9">
    <property type="molecule type" value="protein"/>
</dbReference>
<dbReference type="GO" id="GO:0016020">
    <property type="term" value="C:membrane"/>
    <property type="evidence" value="ECO:0007669"/>
    <property type="project" value="UniProtKB-SubCell"/>
</dbReference>
<dbReference type="InterPro" id="IPR005374">
    <property type="entry name" value="BBLN_eukaryota"/>
</dbReference>
<dbReference type="PANTHER" id="PTHR34344:SF1">
    <property type="entry name" value="BUBLIN COILED-COIL PROTEIN"/>
    <property type="match status" value="1"/>
</dbReference>
<dbReference type="PANTHER" id="PTHR34344">
    <property type="entry name" value="UPF0184 PROTEIN C9ORF16"/>
    <property type="match status" value="1"/>
</dbReference>
<proteinExistence type="uncertain"/>
<evidence type="ECO:0000255" key="1"/>
<evidence type="ECO:0000256" key="2">
    <source>
        <dbReference type="SAM" id="MobiDB-lite"/>
    </source>
</evidence>
<evidence type="ECO:0000305" key="3"/>
<accession>Q8N1Y9</accession>
<accession>A7E2V8</accession>
<keyword id="KW-0472">Membrane</keyword>
<keyword id="KW-1185">Reference proteome</keyword>
<keyword id="KW-0732">Signal</keyword>
<keyword id="KW-0812">Transmembrane</keyword>
<keyword id="KW-1133">Transmembrane helix</keyword>